<feature type="chain" id="PRO_0000324223" description="Nuclear export protein">
    <location>
        <begin position="1"/>
        <end position="121"/>
    </location>
</feature>
<feature type="short sequence motif" description="Nuclear export signal" evidence="1">
    <location>
        <begin position="12"/>
        <end position="21"/>
    </location>
</feature>
<feature type="short sequence motif" description="Nuclear export signal" evidence="1">
    <location>
        <begin position="85"/>
        <end position="94"/>
    </location>
</feature>
<gene>
    <name evidence="1" type="primary">NS</name>
</gene>
<organismHost>
    <name type="scientific">Aves</name>
    <dbReference type="NCBI Taxonomy" id="8782"/>
</organismHost>
<organismHost>
    <name type="scientific">Equus caballus</name>
    <name type="common">Horse</name>
    <dbReference type="NCBI Taxonomy" id="9796"/>
</organismHost>
<name>NEP_I80A6</name>
<sequence length="121" mass="14272">MDSNTITSFQDILQRMSKMQLESSSADLNGMITQFERLKIYRDSLGESVMRMGDLHSLQNRNATWRDELSQKFEEIRWLIAECRNILTKTENSFEQITFLQALQLLLEVESEIRTFSFQLI</sequence>
<proteinExistence type="inferred from homology"/>
<organism>
    <name type="scientific">Influenza A virus (strain A/Duck/Hokkaido/8/1980 H3N8)</name>
    <dbReference type="NCBI Taxonomy" id="387207"/>
    <lineage>
        <taxon>Viruses</taxon>
        <taxon>Riboviria</taxon>
        <taxon>Orthornavirae</taxon>
        <taxon>Negarnaviricota</taxon>
        <taxon>Polyploviricotina</taxon>
        <taxon>Insthoviricetes</taxon>
        <taxon>Articulavirales</taxon>
        <taxon>Orthomyxoviridae</taxon>
        <taxon>Alphainfluenzavirus</taxon>
        <taxon>Alphainfluenzavirus influenzae</taxon>
        <taxon>Influenza A virus</taxon>
    </lineage>
</organism>
<comment type="function">
    <text evidence="1">Mediates the nuclear export of encapsidated genomic RNAs (ribonucleoproteins, RNPs). Acts as an adapter between viral RNPs complexes and the nuclear export machinery of the cell. Possesses no intrinsic RNA-binding activity, but includes a C-terminal M1-binding domain. This domain is believed to allow recognition of RNPs bound to the protein M1. Since protein M1 is not available in large quantities before late stages of infection, such an indirect recognition mechanism probably ensures that genomic RNPs are not exported from the host nucleus until sufficient quantities of viral mRNA and progeny genomic RNA have been synthesized. Furthermore, the RNPs enter the host cytoplasm only when associated with the M1 protein that is necessary to guide them to the plasma membrane. May down-regulate viral RNA synthesis when overproduced.</text>
</comment>
<comment type="subunit">
    <text evidence="1">Interacts with protein M1. May interact with host nucleoporin RAB/HRB and exportin XPO1/CRM1.</text>
</comment>
<comment type="subcellular location">
    <subcellularLocation>
        <location evidence="1">Virion</location>
    </subcellularLocation>
    <subcellularLocation>
        <location evidence="1">Host nucleus</location>
    </subcellularLocation>
</comment>
<comment type="alternative products">
    <event type="alternative splicing"/>
    <isoform>
        <id>Q08IG7-1</id>
        <name>NEP</name>
        <name>NS2</name>
        <sequence type="displayed"/>
    </isoform>
    <isoform>
        <id>Q08IG6-1</id>
        <name>NS1</name>
        <sequence type="external"/>
    </isoform>
</comment>
<comment type="similarity">
    <text evidence="1">Belongs to the influenza viruses NEP family.</text>
</comment>
<reference key="1">
    <citation type="submission" date="2006-09" db="EMBL/GenBank/DDBJ databases">
        <title>Evolutionary characterization of H3N8 viruses isolated from ducks in Hokkaido.</title>
        <authorList>
            <person name="Kida H."/>
            <person name="Sakoda Y."/>
        </authorList>
    </citation>
    <scope>NUCLEOTIDE SEQUENCE [GENOMIC RNA]</scope>
</reference>
<keyword id="KW-0025">Alternative splicing</keyword>
<keyword id="KW-1048">Host nucleus</keyword>
<keyword id="KW-0945">Host-virus interaction</keyword>
<keyword id="KW-0813">Transport</keyword>
<keyword id="KW-0946">Virion</keyword>
<dbReference type="EMBL" id="AB275287">
    <property type="protein sequence ID" value="BAF33064.1"/>
    <property type="molecule type" value="Genomic_RNA"/>
</dbReference>
<dbReference type="SMR" id="Q08IG7"/>
<dbReference type="Proteomes" id="UP000008578">
    <property type="component" value="Genome"/>
</dbReference>
<dbReference type="GO" id="GO:0042025">
    <property type="term" value="C:host cell nucleus"/>
    <property type="evidence" value="ECO:0007669"/>
    <property type="project" value="UniProtKB-SubCell"/>
</dbReference>
<dbReference type="GO" id="GO:0044423">
    <property type="term" value="C:virion component"/>
    <property type="evidence" value="ECO:0007669"/>
    <property type="project" value="UniProtKB-UniRule"/>
</dbReference>
<dbReference type="GO" id="GO:0039675">
    <property type="term" value="P:exit of virus from host cell nucleus through nuclear pore"/>
    <property type="evidence" value="ECO:0007669"/>
    <property type="project" value="UniProtKB-UniRule"/>
</dbReference>
<dbReference type="Gene3D" id="1.10.287.230">
    <property type="match status" value="1"/>
</dbReference>
<dbReference type="HAMAP" id="MF_04067">
    <property type="entry name" value="INFV_NEP"/>
    <property type="match status" value="1"/>
</dbReference>
<dbReference type="InterPro" id="IPR000968">
    <property type="entry name" value="Flu_NS2"/>
</dbReference>
<dbReference type="Pfam" id="PF00601">
    <property type="entry name" value="Flu_NS2"/>
    <property type="match status" value="1"/>
</dbReference>
<dbReference type="SUPFAM" id="SSF101156">
    <property type="entry name" value="Nonstructural protein ns2, Nep, M1-binding domain"/>
    <property type="match status" value="1"/>
</dbReference>
<evidence type="ECO:0000255" key="1">
    <source>
        <dbReference type="HAMAP-Rule" id="MF_04067"/>
    </source>
</evidence>
<accession>Q08IG7</accession>
<protein>
    <recommendedName>
        <fullName evidence="1">Nuclear export protein</fullName>
        <shortName evidence="1">NEP</shortName>
    </recommendedName>
    <alternativeName>
        <fullName evidence="1">Non-structural protein 2</fullName>
        <shortName evidence="1">NS2</shortName>
    </alternativeName>
</protein>